<reference key="1">
    <citation type="journal article" date="2009" name="PLoS Pathog.">
        <title>Genomic evidence for the evolution of Streptococcus equi: host restriction, increased virulence, and genetic exchange with human pathogens.</title>
        <authorList>
            <person name="Holden M.T.G."/>
            <person name="Heather Z."/>
            <person name="Paillot R."/>
            <person name="Steward K.F."/>
            <person name="Webb K."/>
            <person name="Ainslie F."/>
            <person name="Jourdan T."/>
            <person name="Bason N.C."/>
            <person name="Holroyd N.E."/>
            <person name="Mungall K."/>
            <person name="Quail M.A."/>
            <person name="Sanders M."/>
            <person name="Simmonds M."/>
            <person name="Willey D."/>
            <person name="Brooks K."/>
            <person name="Aanensen D.M."/>
            <person name="Spratt B.G."/>
            <person name="Jolley K.A."/>
            <person name="Maiden M.C.J."/>
            <person name="Kehoe M."/>
            <person name="Chanter N."/>
            <person name="Bentley S.D."/>
            <person name="Robinson C."/>
            <person name="Maskell D.J."/>
            <person name="Parkhill J."/>
            <person name="Waller A.S."/>
        </authorList>
    </citation>
    <scope>NUCLEOTIDE SEQUENCE [LARGE SCALE GENOMIC DNA]</scope>
    <source>
        <strain>4047</strain>
    </source>
</reference>
<proteinExistence type="inferred from homology"/>
<gene>
    <name evidence="1" type="primary">rpmD</name>
    <name type="ordered locus">SEQ_0073</name>
</gene>
<comment type="subunit">
    <text evidence="1">Part of the 50S ribosomal subunit.</text>
</comment>
<comment type="similarity">
    <text evidence="1">Belongs to the universal ribosomal protein uL30 family.</text>
</comment>
<evidence type="ECO:0000255" key="1">
    <source>
        <dbReference type="HAMAP-Rule" id="MF_01371"/>
    </source>
</evidence>
<evidence type="ECO:0000305" key="2"/>
<keyword id="KW-0687">Ribonucleoprotein</keyword>
<keyword id="KW-0689">Ribosomal protein</keyword>
<name>RL30_STRE4</name>
<sequence>MAQIKITLTKSPIGRKPEQRKTVVALGLGKLNSSVIKEDNAAIRGMVTAISHLVTVEDVK</sequence>
<feature type="chain" id="PRO_1000184160" description="Large ribosomal subunit protein uL30">
    <location>
        <begin position="1"/>
        <end position="60"/>
    </location>
</feature>
<protein>
    <recommendedName>
        <fullName evidence="1">Large ribosomal subunit protein uL30</fullName>
    </recommendedName>
    <alternativeName>
        <fullName evidence="2">50S ribosomal protein L30</fullName>
    </alternativeName>
</protein>
<accession>C0MBI1</accession>
<dbReference type="EMBL" id="FM204883">
    <property type="protein sequence ID" value="CAW92000.1"/>
    <property type="molecule type" value="Genomic_DNA"/>
</dbReference>
<dbReference type="RefSeq" id="WP_003046072.1">
    <property type="nucleotide sequence ID" value="NC_012471.1"/>
</dbReference>
<dbReference type="SMR" id="C0MBI1"/>
<dbReference type="GeneID" id="98392410"/>
<dbReference type="KEGG" id="seu:SEQ_0073"/>
<dbReference type="HOGENOM" id="CLU_131047_2_1_9"/>
<dbReference type="OrthoDB" id="9812790at2"/>
<dbReference type="Proteomes" id="UP000001365">
    <property type="component" value="Chromosome"/>
</dbReference>
<dbReference type="GO" id="GO:0022625">
    <property type="term" value="C:cytosolic large ribosomal subunit"/>
    <property type="evidence" value="ECO:0007669"/>
    <property type="project" value="TreeGrafter"/>
</dbReference>
<dbReference type="GO" id="GO:0003735">
    <property type="term" value="F:structural constituent of ribosome"/>
    <property type="evidence" value="ECO:0007669"/>
    <property type="project" value="InterPro"/>
</dbReference>
<dbReference type="GO" id="GO:0006412">
    <property type="term" value="P:translation"/>
    <property type="evidence" value="ECO:0007669"/>
    <property type="project" value="UniProtKB-UniRule"/>
</dbReference>
<dbReference type="CDD" id="cd01658">
    <property type="entry name" value="Ribosomal_L30"/>
    <property type="match status" value="1"/>
</dbReference>
<dbReference type="FunFam" id="3.30.1390.20:FF:000001">
    <property type="entry name" value="50S ribosomal protein L30"/>
    <property type="match status" value="1"/>
</dbReference>
<dbReference type="Gene3D" id="3.30.1390.20">
    <property type="entry name" value="Ribosomal protein L30, ferredoxin-like fold domain"/>
    <property type="match status" value="1"/>
</dbReference>
<dbReference type="HAMAP" id="MF_01371_B">
    <property type="entry name" value="Ribosomal_uL30_B"/>
    <property type="match status" value="1"/>
</dbReference>
<dbReference type="InterPro" id="IPR036919">
    <property type="entry name" value="Ribo_uL30_ferredoxin-like_sf"/>
</dbReference>
<dbReference type="InterPro" id="IPR005996">
    <property type="entry name" value="Ribosomal_uL30_bac-type"/>
</dbReference>
<dbReference type="InterPro" id="IPR018038">
    <property type="entry name" value="Ribosomal_uL30_CS"/>
</dbReference>
<dbReference type="InterPro" id="IPR016082">
    <property type="entry name" value="Ribosomal_uL30_ferredoxin-like"/>
</dbReference>
<dbReference type="NCBIfam" id="TIGR01308">
    <property type="entry name" value="rpmD_bact"/>
    <property type="match status" value="1"/>
</dbReference>
<dbReference type="PANTHER" id="PTHR15892:SF2">
    <property type="entry name" value="LARGE RIBOSOMAL SUBUNIT PROTEIN UL30M"/>
    <property type="match status" value="1"/>
</dbReference>
<dbReference type="PANTHER" id="PTHR15892">
    <property type="entry name" value="MITOCHONDRIAL RIBOSOMAL PROTEIN L30"/>
    <property type="match status" value="1"/>
</dbReference>
<dbReference type="Pfam" id="PF00327">
    <property type="entry name" value="Ribosomal_L30"/>
    <property type="match status" value="1"/>
</dbReference>
<dbReference type="PIRSF" id="PIRSF002211">
    <property type="entry name" value="Ribosomal_L30_bac-type"/>
    <property type="match status" value="1"/>
</dbReference>
<dbReference type="SUPFAM" id="SSF55129">
    <property type="entry name" value="Ribosomal protein L30p/L7e"/>
    <property type="match status" value="1"/>
</dbReference>
<dbReference type="PROSITE" id="PS00634">
    <property type="entry name" value="RIBOSOMAL_L30"/>
    <property type="match status" value="1"/>
</dbReference>
<organism>
    <name type="scientific">Streptococcus equi subsp. equi (strain 4047)</name>
    <dbReference type="NCBI Taxonomy" id="553482"/>
    <lineage>
        <taxon>Bacteria</taxon>
        <taxon>Bacillati</taxon>
        <taxon>Bacillota</taxon>
        <taxon>Bacilli</taxon>
        <taxon>Lactobacillales</taxon>
        <taxon>Streptococcaceae</taxon>
        <taxon>Streptococcus</taxon>
    </lineage>
</organism>